<organism>
    <name type="scientific">Blochmanniella floridana</name>
    <dbReference type="NCBI Taxonomy" id="203907"/>
    <lineage>
        <taxon>Bacteria</taxon>
        <taxon>Pseudomonadati</taxon>
        <taxon>Pseudomonadota</taxon>
        <taxon>Gammaproteobacteria</taxon>
        <taxon>Enterobacterales</taxon>
        <taxon>Enterobacteriaceae</taxon>
        <taxon>ant endosymbionts</taxon>
        <taxon>Candidatus Blochmanniella</taxon>
    </lineage>
</organism>
<dbReference type="EMBL" id="BX248583">
    <property type="protein sequence ID" value="CAD83243.1"/>
    <property type="molecule type" value="Genomic_DNA"/>
</dbReference>
<dbReference type="SMR" id="Q7VRP3"/>
<dbReference type="STRING" id="203907.Bfl561"/>
<dbReference type="KEGG" id="bfl:Bfl561"/>
<dbReference type="eggNOG" id="COG0080">
    <property type="taxonomic scope" value="Bacteria"/>
</dbReference>
<dbReference type="HOGENOM" id="CLU_074237_2_0_6"/>
<dbReference type="OrthoDB" id="9802408at2"/>
<dbReference type="Proteomes" id="UP000002192">
    <property type="component" value="Chromosome"/>
</dbReference>
<dbReference type="GO" id="GO:0022625">
    <property type="term" value="C:cytosolic large ribosomal subunit"/>
    <property type="evidence" value="ECO:0007669"/>
    <property type="project" value="TreeGrafter"/>
</dbReference>
<dbReference type="GO" id="GO:0070180">
    <property type="term" value="F:large ribosomal subunit rRNA binding"/>
    <property type="evidence" value="ECO:0007669"/>
    <property type="project" value="UniProtKB-UniRule"/>
</dbReference>
<dbReference type="GO" id="GO:0003735">
    <property type="term" value="F:structural constituent of ribosome"/>
    <property type="evidence" value="ECO:0007669"/>
    <property type="project" value="InterPro"/>
</dbReference>
<dbReference type="GO" id="GO:0006412">
    <property type="term" value="P:translation"/>
    <property type="evidence" value="ECO:0007669"/>
    <property type="project" value="UniProtKB-UniRule"/>
</dbReference>
<dbReference type="CDD" id="cd00349">
    <property type="entry name" value="Ribosomal_L11"/>
    <property type="match status" value="1"/>
</dbReference>
<dbReference type="FunFam" id="3.30.1550.10:FF:000005">
    <property type="entry name" value="50S ribosomal protein L11"/>
    <property type="match status" value="1"/>
</dbReference>
<dbReference type="FunFam" id="1.10.10.250:FF:000003">
    <property type="entry name" value="Mitochondrial ribosomal protein L11"/>
    <property type="match status" value="1"/>
</dbReference>
<dbReference type="Gene3D" id="1.10.10.250">
    <property type="entry name" value="Ribosomal protein L11, C-terminal domain"/>
    <property type="match status" value="1"/>
</dbReference>
<dbReference type="Gene3D" id="3.30.1550.10">
    <property type="entry name" value="Ribosomal protein L11/L12, N-terminal domain"/>
    <property type="match status" value="1"/>
</dbReference>
<dbReference type="HAMAP" id="MF_00736">
    <property type="entry name" value="Ribosomal_uL11"/>
    <property type="match status" value="1"/>
</dbReference>
<dbReference type="InterPro" id="IPR000911">
    <property type="entry name" value="Ribosomal_uL11"/>
</dbReference>
<dbReference type="InterPro" id="IPR006519">
    <property type="entry name" value="Ribosomal_uL11_bac-typ"/>
</dbReference>
<dbReference type="InterPro" id="IPR020783">
    <property type="entry name" value="Ribosomal_uL11_C"/>
</dbReference>
<dbReference type="InterPro" id="IPR036769">
    <property type="entry name" value="Ribosomal_uL11_C_sf"/>
</dbReference>
<dbReference type="InterPro" id="IPR020785">
    <property type="entry name" value="Ribosomal_uL11_CS"/>
</dbReference>
<dbReference type="InterPro" id="IPR020784">
    <property type="entry name" value="Ribosomal_uL11_N"/>
</dbReference>
<dbReference type="InterPro" id="IPR036796">
    <property type="entry name" value="Ribosomal_uL11_N_sf"/>
</dbReference>
<dbReference type="NCBIfam" id="TIGR01632">
    <property type="entry name" value="L11_bact"/>
    <property type="match status" value="1"/>
</dbReference>
<dbReference type="PANTHER" id="PTHR11661">
    <property type="entry name" value="60S RIBOSOMAL PROTEIN L12"/>
    <property type="match status" value="1"/>
</dbReference>
<dbReference type="PANTHER" id="PTHR11661:SF1">
    <property type="entry name" value="LARGE RIBOSOMAL SUBUNIT PROTEIN UL11M"/>
    <property type="match status" value="1"/>
</dbReference>
<dbReference type="Pfam" id="PF00298">
    <property type="entry name" value="Ribosomal_L11"/>
    <property type="match status" value="1"/>
</dbReference>
<dbReference type="Pfam" id="PF03946">
    <property type="entry name" value="Ribosomal_L11_N"/>
    <property type="match status" value="1"/>
</dbReference>
<dbReference type="SMART" id="SM00649">
    <property type="entry name" value="RL11"/>
    <property type="match status" value="1"/>
</dbReference>
<dbReference type="SUPFAM" id="SSF54747">
    <property type="entry name" value="Ribosomal L11/L12e N-terminal domain"/>
    <property type="match status" value="1"/>
</dbReference>
<dbReference type="SUPFAM" id="SSF46906">
    <property type="entry name" value="Ribosomal protein L11, C-terminal domain"/>
    <property type="match status" value="1"/>
</dbReference>
<dbReference type="PROSITE" id="PS00359">
    <property type="entry name" value="RIBOSOMAL_L11"/>
    <property type="match status" value="1"/>
</dbReference>
<name>RL11_BLOFL</name>
<reference key="1">
    <citation type="journal article" date="2003" name="Proc. Natl. Acad. Sci. U.S.A.">
        <title>The genome sequence of Blochmannia floridanus: comparative analysis of reduced genomes.</title>
        <authorList>
            <person name="Gil R."/>
            <person name="Silva F.J."/>
            <person name="Zientz E."/>
            <person name="Delmotte F."/>
            <person name="Gonzalez-Candelas F."/>
            <person name="Latorre A."/>
            <person name="Rausell C."/>
            <person name="Kamerbeek J."/>
            <person name="Gadau J."/>
            <person name="Hoelldobler B."/>
            <person name="van Ham R.C.H.J."/>
            <person name="Gross R."/>
            <person name="Moya A."/>
        </authorList>
    </citation>
    <scope>NUCLEOTIDE SEQUENCE [LARGE SCALE GENOMIC DNA]</scope>
</reference>
<comment type="function">
    <text evidence="1">Forms part of the ribosomal stalk which helps the ribosome interact with GTP-bound translation factors.</text>
</comment>
<comment type="subunit">
    <text evidence="1">Part of the ribosomal stalk of the 50S ribosomal subunit. Interacts with L10 and the large rRNA to form the base of the stalk. L10 forms an elongated spine to which L12 dimers bind in a sequential fashion forming a multimeric L10(L12)X complex.</text>
</comment>
<comment type="PTM">
    <text evidence="1">One or more lysine residues are methylated.</text>
</comment>
<comment type="similarity">
    <text evidence="1">Belongs to the universal ribosomal protein uL11 family.</text>
</comment>
<sequence length="146" mass="15848">MIVKKKVQSCIKLQIEARSATPSPPIGPALGQQGINIMKFCKDFNTRTADFEMGLILPVVITVYVDRSFSFVIKTPTAVFLLKKAAGIKSGSEKPKCVSVGKVLISQIYEIAKIKLIDMTSLNLESASKSIMGTARSIGLEVEDNL</sequence>
<gene>
    <name evidence="1" type="primary">rplK</name>
    <name type="ordered locus">Bfl561</name>
</gene>
<proteinExistence type="inferred from homology"/>
<protein>
    <recommendedName>
        <fullName evidence="1">Large ribosomal subunit protein uL11</fullName>
    </recommendedName>
    <alternativeName>
        <fullName evidence="2">50S ribosomal protein L11</fullName>
    </alternativeName>
</protein>
<accession>Q7VRP3</accession>
<keyword id="KW-0488">Methylation</keyword>
<keyword id="KW-1185">Reference proteome</keyword>
<keyword id="KW-0687">Ribonucleoprotein</keyword>
<keyword id="KW-0689">Ribosomal protein</keyword>
<keyword id="KW-0694">RNA-binding</keyword>
<keyword id="KW-0699">rRNA-binding</keyword>
<evidence type="ECO:0000255" key="1">
    <source>
        <dbReference type="HAMAP-Rule" id="MF_00736"/>
    </source>
</evidence>
<evidence type="ECO:0000305" key="2"/>
<feature type="chain" id="PRO_0000104265" description="Large ribosomal subunit protein uL11">
    <location>
        <begin position="1"/>
        <end position="146"/>
    </location>
</feature>